<dbReference type="EC" id="2.4.1.-" evidence="3"/>
<dbReference type="EMBL" id="OR426403">
    <property type="protein sequence ID" value="WWM48156.1"/>
    <property type="molecule type" value="mRNA"/>
</dbReference>
<dbReference type="EMBL" id="JBDFQZ010000008">
    <property type="protein sequence ID" value="KAK9698621.1"/>
    <property type="molecule type" value="Genomic_DNA"/>
</dbReference>
<dbReference type="UniPathway" id="UPA00213"/>
<dbReference type="Proteomes" id="UP001443914">
    <property type="component" value="Unassembled WGS sequence"/>
</dbReference>
<dbReference type="GO" id="GO:0035251">
    <property type="term" value="F:UDP-glucosyltransferase activity"/>
    <property type="evidence" value="ECO:0007669"/>
    <property type="project" value="TreeGrafter"/>
</dbReference>
<dbReference type="GO" id="GO:0008194">
    <property type="term" value="F:UDP-glycosyltransferase activity"/>
    <property type="evidence" value="ECO:0000314"/>
    <property type="project" value="UniProtKB"/>
</dbReference>
<dbReference type="GO" id="GO:0070085">
    <property type="term" value="P:glycosylation"/>
    <property type="evidence" value="ECO:0000314"/>
    <property type="project" value="UniProtKB"/>
</dbReference>
<dbReference type="GO" id="GO:0016135">
    <property type="term" value="P:saponin biosynthetic process"/>
    <property type="evidence" value="ECO:0000314"/>
    <property type="project" value="UniProtKB"/>
</dbReference>
<dbReference type="GO" id="GO:0016104">
    <property type="term" value="P:triterpenoid biosynthetic process"/>
    <property type="evidence" value="ECO:0000314"/>
    <property type="project" value="UniProtKB"/>
</dbReference>
<dbReference type="CDD" id="cd03784">
    <property type="entry name" value="GT1_Gtf-like"/>
    <property type="match status" value="1"/>
</dbReference>
<dbReference type="FunFam" id="3.40.50.2000:FF:000047">
    <property type="entry name" value="Glycosyltransferase"/>
    <property type="match status" value="1"/>
</dbReference>
<dbReference type="Gene3D" id="3.40.50.2000">
    <property type="entry name" value="Glycogen Phosphorylase B"/>
    <property type="match status" value="2"/>
</dbReference>
<dbReference type="InterPro" id="IPR002213">
    <property type="entry name" value="UDP_glucos_trans"/>
</dbReference>
<dbReference type="PANTHER" id="PTHR48047">
    <property type="entry name" value="GLYCOSYLTRANSFERASE"/>
    <property type="match status" value="1"/>
</dbReference>
<dbReference type="PANTHER" id="PTHR48047:SF150">
    <property type="entry name" value="SOLANIDINE UDP-GLUCOSE GLUCOSYLTRANSFERASE 1"/>
    <property type="match status" value="1"/>
</dbReference>
<dbReference type="Pfam" id="PF00201">
    <property type="entry name" value="UDPGT"/>
    <property type="match status" value="1"/>
</dbReference>
<dbReference type="SUPFAM" id="SSF53756">
    <property type="entry name" value="UDP-Glycosyltransferase/glycogen phosphorylase"/>
    <property type="match status" value="1"/>
</dbReference>
<gene>
    <name evidence="4" type="primary">UGT73CC6</name>
    <name evidence="4" type="synonym">Saoffv11041839m</name>
    <name evidence="6" type="ORF">RND81_08G118300</name>
</gene>
<accession>A0AAW1J9R8</accession>
<sequence length="487" mass="54552">MKSPLKLYFLPYISPGHMIPLSEMARLFANQGHHVTIITTTSNATLLQKYTTATLSLHLIPLPTKEAGLPDGLENFISVNDLETAGKLYYALSLLQPVIEEFITSNPPDCIVSDMFYPWTADLASQLQVPRMVFHAACIFAMCMKESMRGPDAPHLKVSSDYELFEVKGLPDPVFMTRAQLPDYVRTPNGYTQLMEMWREAEKKSYGVMVNNFYELDPAYTEHYSKIMGHKVWNIGPAAQILHRGSGDKIERVHKAVVGENQCLSWLDTKEPNSVFYVCFGSAIRFPDDQLYEIASALESSGAQFIWAVLGKDSDNSDSNSDSEWLPAGFEEKMKETGRGMIIRGWAPQVLILDHPSVGGFMTHCGWNSTIEGVSAGVGMVTWPLYAEQFYNEKLITQVLKIGVEAGVEEWNLWVDVGRKLVKREKIEAAIRAVMGEAGVEMRRKAKELSVKAKKAVQDGGSSHRNLMALIEDLQRIRDDKMSKVAN</sequence>
<keyword id="KW-0808">Transferase</keyword>
<organism>
    <name type="scientific">Saponaria officinalis</name>
    <name type="common">Common soapwort</name>
    <name type="synonym">Lychnis saponaria</name>
    <dbReference type="NCBI Taxonomy" id="3572"/>
    <lineage>
        <taxon>Eukaryota</taxon>
        <taxon>Viridiplantae</taxon>
        <taxon>Streptophyta</taxon>
        <taxon>Embryophyta</taxon>
        <taxon>Tracheophyta</taxon>
        <taxon>Spermatophyta</taxon>
        <taxon>Magnoliopsida</taxon>
        <taxon>eudicotyledons</taxon>
        <taxon>Gunneridae</taxon>
        <taxon>Pentapetalae</taxon>
        <taxon>Caryophyllales</taxon>
        <taxon>Caryophyllaceae</taxon>
        <taxon>Caryophylleae</taxon>
        <taxon>Saponaria</taxon>
    </lineage>
</organism>
<name>GT736_SAPOF</name>
<reference evidence="7" key="1">
    <citation type="journal article" date="2025" name="Nat. Chem. Biol.">
        <title>Unlocking saponin biosynthesis in soapwort.</title>
        <authorList>
            <person name="Jo S."/>
            <person name="El-Demerdash A."/>
            <person name="Owen C."/>
            <person name="Srivastava V."/>
            <person name="Wu D."/>
            <person name="Kikuchi S."/>
            <person name="Reed J."/>
            <person name="Hodgson H."/>
            <person name="Harkess A."/>
            <person name="Shu S."/>
            <person name="Plott C."/>
            <person name="Jenkins J."/>
            <person name="Williams M."/>
            <person name="Boston L.-B."/>
            <person name="Lacchini E."/>
            <person name="Qu T."/>
            <person name="Goossens A."/>
            <person name="Grimwood J."/>
            <person name="Schmutz J."/>
            <person name="Leebens-Mack J."/>
            <person name="Osbourn A."/>
        </authorList>
    </citation>
    <scope>NUCLEOTIDE SEQUENCE [MRNA]</scope>
    <scope>FUNCTION</scope>
    <scope>CATALYTIC ACTIVITY</scope>
    <scope>TISSUE SPECIFICITY</scope>
    <scope>PATHWAY</scope>
    <scope>BIOTECHNOLOGY</scope>
</reference>
<reference evidence="6" key="2">
    <citation type="submission" date="2024-03" db="EMBL/GenBank/DDBJ databases">
        <title>WGS assembly of Saponaria officinalis var. Norfolk2.</title>
        <authorList>
            <person name="Jenkins J."/>
            <person name="Shu S."/>
            <person name="Grimwood J."/>
            <person name="Barry K."/>
            <person name="Goodstein D."/>
            <person name="Schmutz J."/>
            <person name="Leebens-Mack J."/>
            <person name="Osbourn A."/>
        </authorList>
    </citation>
    <scope>NUCLEOTIDE SEQUENCE [LARGE SCALE GENOMIC DNA]</scope>
    <source>
        <strain>cv. Norfolk2</strain>
        <tissue>Leaf</tissue>
    </source>
</reference>
<feature type="chain" id="PRO_0000462359" description="UDP-glucosyl transferase 73CC6">
    <location>
        <begin position="1"/>
        <end position="487"/>
    </location>
</feature>
<feature type="active site" description="Proton acceptor" evidence="1">
    <location>
        <position position="17"/>
    </location>
</feature>
<feature type="active site" description="Charge relay" evidence="1">
    <location>
        <position position="114"/>
    </location>
</feature>
<feature type="binding site" evidence="2">
    <location>
        <position position="282"/>
    </location>
    <ligand>
        <name>UDP</name>
        <dbReference type="ChEBI" id="CHEBI:58223"/>
    </ligand>
</feature>
<feature type="binding site" evidence="2">
    <location>
        <position position="346"/>
    </location>
    <ligand>
        <name>UDP</name>
        <dbReference type="ChEBI" id="CHEBI:58223"/>
    </ligand>
</feature>
<feature type="binding site" evidence="2">
    <location>
        <position position="347"/>
    </location>
    <ligand>
        <name>UDP</name>
        <dbReference type="ChEBI" id="CHEBI:58223"/>
    </ligand>
</feature>
<feature type="binding site" evidence="2">
    <location>
        <position position="364"/>
    </location>
    <ligand>
        <name>UDP</name>
        <dbReference type="ChEBI" id="CHEBI:58223"/>
    </ligand>
</feature>
<feature type="binding site" evidence="2">
    <location>
        <position position="368"/>
    </location>
    <ligand>
        <name>UDP</name>
        <dbReference type="ChEBI" id="CHEBI:58223"/>
    </ligand>
</feature>
<feature type="binding site" evidence="2">
    <location>
        <position position="369"/>
    </location>
    <ligand>
        <name>UDP</name>
        <dbReference type="ChEBI" id="CHEBI:58223"/>
    </ligand>
</feature>
<feature type="binding site" evidence="2">
    <location>
        <position position="372"/>
    </location>
    <ligand>
        <name>UDP</name>
        <dbReference type="ChEBI" id="CHEBI:58223"/>
    </ligand>
</feature>
<feature type="binding site" evidence="2">
    <location>
        <position position="386"/>
    </location>
    <ligand>
        <name>UDP</name>
        <dbReference type="ChEBI" id="CHEBI:58223"/>
    </ligand>
</feature>
<proteinExistence type="evidence at protein level"/>
<comment type="function">
    <text evidence="3">Component of the oleanane-type triterpene saponins (e.g. saponarioside A and saponarioside B) biosynthetic pathway, leading to the production of natural products with detergent properties used as traditional sources of soap (PubMed:39043959). A glycosyltransferase that mediates the conversion of QA-di to QA-tri via the elongation of the C-3 sugar chain with a D-xylose (PubMed:39043959).</text>
</comment>
<comment type="pathway">
    <text evidence="3">Secondary metabolite biosynthesis; terpenoid biosynthesis.</text>
</comment>
<comment type="tissue specificity">
    <text evidence="3">Mainly expressed in flowers and flower buds and, to a lesser extent, in leaves, stems and roots.</text>
</comment>
<comment type="biotechnology">
    <text evidence="4">Soapwort saponins possess anticancer properties and are also being explored as enhancers for endosomal escape in targeted tumor therapies (PubMed:39043959). They may also serve as precursors for vaccine adjuvants (PubMed:39043959).</text>
</comment>
<comment type="similarity">
    <text evidence="5">Belongs to the UDP-glycosyltransferase family.</text>
</comment>
<protein>
    <recommendedName>
        <fullName evidence="4">UDP-glucosyl transferase 73CC6</fullName>
        <shortName evidence="4">SoUGT73CC6</shortName>
        <ecNumber evidence="3">2.4.1.-</ecNumber>
    </recommendedName>
</protein>
<evidence type="ECO:0000250" key="1">
    <source>
        <dbReference type="UniProtKB" id="A0A0A1HA03"/>
    </source>
</evidence>
<evidence type="ECO:0000250" key="2">
    <source>
        <dbReference type="UniProtKB" id="Q9M156"/>
    </source>
</evidence>
<evidence type="ECO:0000269" key="3">
    <source>
    </source>
</evidence>
<evidence type="ECO:0000303" key="4">
    <source>
    </source>
</evidence>
<evidence type="ECO:0000305" key="5"/>
<evidence type="ECO:0000312" key="6">
    <source>
        <dbReference type="EMBL" id="KAK9698621.1"/>
    </source>
</evidence>
<evidence type="ECO:0000312" key="7">
    <source>
        <dbReference type="EMBL" id="WWM48156.1"/>
    </source>
</evidence>